<reference key="1">
    <citation type="journal article" date="1995" name="Science">
        <title>Whole-genome random sequencing and assembly of Haemophilus influenzae Rd.</title>
        <authorList>
            <person name="Fleischmann R.D."/>
            <person name="Adams M.D."/>
            <person name="White O."/>
            <person name="Clayton R.A."/>
            <person name="Kirkness E.F."/>
            <person name="Kerlavage A.R."/>
            <person name="Bult C.J."/>
            <person name="Tomb J.-F."/>
            <person name="Dougherty B.A."/>
            <person name="Merrick J.M."/>
            <person name="McKenney K."/>
            <person name="Sutton G.G."/>
            <person name="FitzHugh W."/>
            <person name="Fields C.A."/>
            <person name="Gocayne J.D."/>
            <person name="Scott J.D."/>
            <person name="Shirley R."/>
            <person name="Liu L.-I."/>
            <person name="Glodek A."/>
            <person name="Kelley J.M."/>
            <person name="Weidman J.F."/>
            <person name="Phillips C.A."/>
            <person name="Spriggs T."/>
            <person name="Hedblom E."/>
            <person name="Cotton M.D."/>
            <person name="Utterback T.R."/>
            <person name="Hanna M.C."/>
            <person name="Nguyen D.T."/>
            <person name="Saudek D.M."/>
            <person name="Brandon R.C."/>
            <person name="Fine L.D."/>
            <person name="Fritchman J.L."/>
            <person name="Fuhrmann J.L."/>
            <person name="Geoghagen N.S.M."/>
            <person name="Gnehm C.L."/>
            <person name="McDonald L.A."/>
            <person name="Small K.V."/>
            <person name="Fraser C.M."/>
            <person name="Smith H.O."/>
            <person name="Venter J.C."/>
        </authorList>
    </citation>
    <scope>NUCLEOTIDE SEQUENCE [LARGE SCALE GENOMIC DNA]</scope>
    <source>
        <strain>ATCC 51907 / DSM 11121 / KW20 / Rd</strain>
    </source>
</reference>
<comment type="similarity">
    <text evidence="1">Belongs to the glycosyltransferase 2 family.</text>
</comment>
<evidence type="ECO:0000305" key="1"/>
<proteinExistence type="inferred from homology"/>
<organism>
    <name type="scientific">Haemophilus influenzae (strain ATCC 51907 / DSM 11121 / KW20 / Rd)</name>
    <dbReference type="NCBI Taxonomy" id="71421"/>
    <lineage>
        <taxon>Bacteria</taxon>
        <taxon>Pseudomonadati</taxon>
        <taxon>Pseudomonadota</taxon>
        <taxon>Gammaproteobacteria</taxon>
        <taxon>Pasteurellales</taxon>
        <taxon>Pasteurellaceae</taxon>
        <taxon>Haemophilus</taxon>
    </lineage>
</organism>
<keyword id="KW-0328">Glycosyltransferase</keyword>
<keyword id="KW-1185">Reference proteome</keyword>
<keyword id="KW-0808">Transferase</keyword>
<feature type="chain" id="PRO_0000059239" description="Uncharacterized glycosyltransferase HI_0868">
    <location>
        <begin position="1"/>
        <end position="250"/>
    </location>
</feature>
<dbReference type="EC" id="2.4.-.-"/>
<dbReference type="EMBL" id="L42023">
    <property type="protein sequence ID" value="AAC22526.1"/>
    <property type="molecule type" value="Genomic_DNA"/>
</dbReference>
<dbReference type="PIR" id="A64099">
    <property type="entry name" value="A64099"/>
</dbReference>
<dbReference type="RefSeq" id="NP_439028.1">
    <property type="nucleotide sequence ID" value="NC_000907.1"/>
</dbReference>
<dbReference type="SMR" id="Q57022"/>
<dbReference type="STRING" id="71421.HI_0868"/>
<dbReference type="CAZy" id="GT2">
    <property type="family name" value="Glycosyltransferase Family 2"/>
</dbReference>
<dbReference type="EnsemblBacteria" id="AAC22526">
    <property type="protein sequence ID" value="AAC22526"/>
    <property type="gene ID" value="HI_0868"/>
</dbReference>
<dbReference type="KEGG" id="hin:HI_0868"/>
<dbReference type="PATRIC" id="fig|71421.8.peg.909"/>
<dbReference type="eggNOG" id="COG0463">
    <property type="taxonomic scope" value="Bacteria"/>
</dbReference>
<dbReference type="HOGENOM" id="CLU_025996_0_3_6"/>
<dbReference type="OrthoDB" id="9802649at2"/>
<dbReference type="PhylomeDB" id="Q57022"/>
<dbReference type="BioCyc" id="HINF71421:G1GJ1-909-MONOMER"/>
<dbReference type="Proteomes" id="UP000000579">
    <property type="component" value="Chromosome"/>
</dbReference>
<dbReference type="GO" id="GO:0016757">
    <property type="term" value="F:glycosyltransferase activity"/>
    <property type="evidence" value="ECO:0000318"/>
    <property type="project" value="GO_Central"/>
</dbReference>
<dbReference type="GO" id="GO:0016758">
    <property type="term" value="F:hexosyltransferase activity"/>
    <property type="evidence" value="ECO:0007669"/>
    <property type="project" value="UniProtKB-ARBA"/>
</dbReference>
<dbReference type="GO" id="GO:0009058">
    <property type="term" value="P:biosynthetic process"/>
    <property type="evidence" value="ECO:0007669"/>
    <property type="project" value="UniProtKB-ARBA"/>
</dbReference>
<dbReference type="CDD" id="cd00761">
    <property type="entry name" value="Glyco_tranf_GTA_type"/>
    <property type="match status" value="1"/>
</dbReference>
<dbReference type="Gene3D" id="3.90.550.10">
    <property type="entry name" value="Spore Coat Polysaccharide Biosynthesis Protein SpsA, Chain A"/>
    <property type="match status" value="1"/>
</dbReference>
<dbReference type="InterPro" id="IPR001173">
    <property type="entry name" value="Glyco_trans_2-like"/>
</dbReference>
<dbReference type="InterPro" id="IPR029044">
    <property type="entry name" value="Nucleotide-diphossugar_trans"/>
</dbReference>
<dbReference type="PANTHER" id="PTHR22916">
    <property type="entry name" value="GLYCOSYLTRANSFERASE"/>
    <property type="match status" value="1"/>
</dbReference>
<dbReference type="PANTHER" id="PTHR22916:SF3">
    <property type="entry name" value="UDP-GLCNAC:BETAGAL BETA-1,3-N-ACETYLGLUCOSAMINYLTRANSFERASE-LIKE PROTEIN 1"/>
    <property type="match status" value="1"/>
</dbReference>
<dbReference type="Pfam" id="PF00535">
    <property type="entry name" value="Glycos_transf_2"/>
    <property type="match status" value="1"/>
</dbReference>
<dbReference type="SUPFAM" id="SSF53448">
    <property type="entry name" value="Nucleotide-diphospho-sugar transferases"/>
    <property type="match status" value="1"/>
</dbReference>
<protein>
    <recommendedName>
        <fullName>Uncharacterized glycosyltransferase HI_0868</fullName>
        <ecNumber>2.4.-.-</ecNumber>
    </recommendedName>
</protein>
<accession>Q57022</accession>
<accession>P96336</accession>
<gene>
    <name type="ordered locus">HI_0868</name>
</gene>
<name>Y868_HAEIN</name>
<sequence>MNMPLISIIMPVYNAECYLNQGILSCLNQSYQNIELILIDDGSTDKSIEIINNIIDKDKRVKLFFTPTNQGPAAARNIGLEKAQGDYITFLDSDDFIANDKLEKQLNFMLQNHLVMTHGNYAFCDLEGNQIKLVTTSKKIDYLTLLQGNQFKIMTVLVERESIKLLRFPNIKHEDYAFFLDCLKEVKQSILYSHQASSFVRIGKVSVSSNKFKSAIWTFNIYFKREKLGVVKSIYYFILYAYNGFIKYKK</sequence>